<sequence length="280" mass="30155">MKLCHFEAGLDQPLFLISGPCVIESEQLAMDTAGQLKEMCAGLGIPFIYKSSFDKANRSSTKSFRGLGLEEGLRILADVKAKIGVPVLTDVHEDTPLDEVAAVVDVLQTPAFLCRQTNFIQNVARAGRPVNIKKGQFLAPWDMQNVVDKAREVGNDQIMVCERGVSFGYNTLVSDMRGLAIMRGTGCPVVFDATHSVQQPGGQGATSGGQREFVPVLARAAVASGVAGVFAETHPDPACALSDGPNAWPLGMMRELLETLKEIDALVKQRGFIEHKLMKA</sequence>
<dbReference type="EC" id="2.5.1.55" evidence="1"/>
<dbReference type="EMBL" id="CP000116">
    <property type="protein sequence ID" value="AAZ96573.1"/>
    <property type="molecule type" value="Genomic_DNA"/>
</dbReference>
<dbReference type="RefSeq" id="WP_011311132.1">
    <property type="nucleotide sequence ID" value="NC_007404.1"/>
</dbReference>
<dbReference type="SMR" id="Q3SL44"/>
<dbReference type="STRING" id="292415.Tbd_0620"/>
<dbReference type="KEGG" id="tbd:Tbd_0620"/>
<dbReference type="eggNOG" id="COG2877">
    <property type="taxonomic scope" value="Bacteria"/>
</dbReference>
<dbReference type="HOGENOM" id="CLU_036666_0_0_4"/>
<dbReference type="OrthoDB" id="9776934at2"/>
<dbReference type="UniPathway" id="UPA00030"/>
<dbReference type="UniPathway" id="UPA00357">
    <property type="reaction ID" value="UER00474"/>
</dbReference>
<dbReference type="Proteomes" id="UP000008291">
    <property type="component" value="Chromosome"/>
</dbReference>
<dbReference type="GO" id="GO:0005737">
    <property type="term" value="C:cytoplasm"/>
    <property type="evidence" value="ECO:0007669"/>
    <property type="project" value="UniProtKB-SubCell"/>
</dbReference>
<dbReference type="GO" id="GO:0008676">
    <property type="term" value="F:3-deoxy-8-phosphooctulonate synthase activity"/>
    <property type="evidence" value="ECO:0007669"/>
    <property type="project" value="UniProtKB-UniRule"/>
</dbReference>
<dbReference type="GO" id="GO:0019294">
    <property type="term" value="P:keto-3-deoxy-D-manno-octulosonic acid biosynthetic process"/>
    <property type="evidence" value="ECO:0007669"/>
    <property type="project" value="UniProtKB-UniRule"/>
</dbReference>
<dbReference type="Gene3D" id="3.20.20.70">
    <property type="entry name" value="Aldolase class I"/>
    <property type="match status" value="1"/>
</dbReference>
<dbReference type="HAMAP" id="MF_00056">
    <property type="entry name" value="KDO8P_synth"/>
    <property type="match status" value="1"/>
</dbReference>
<dbReference type="InterPro" id="IPR013785">
    <property type="entry name" value="Aldolase_TIM"/>
</dbReference>
<dbReference type="InterPro" id="IPR006218">
    <property type="entry name" value="DAHP1/KDSA"/>
</dbReference>
<dbReference type="InterPro" id="IPR006269">
    <property type="entry name" value="KDO8P_synthase"/>
</dbReference>
<dbReference type="NCBIfam" id="TIGR01362">
    <property type="entry name" value="KDO8P_synth"/>
    <property type="match status" value="1"/>
</dbReference>
<dbReference type="NCBIfam" id="NF003543">
    <property type="entry name" value="PRK05198.1"/>
    <property type="match status" value="1"/>
</dbReference>
<dbReference type="PANTHER" id="PTHR21057">
    <property type="entry name" value="PHOSPHO-2-DEHYDRO-3-DEOXYHEPTONATE ALDOLASE"/>
    <property type="match status" value="1"/>
</dbReference>
<dbReference type="Pfam" id="PF00793">
    <property type="entry name" value="DAHP_synth_1"/>
    <property type="match status" value="1"/>
</dbReference>
<dbReference type="SUPFAM" id="SSF51569">
    <property type="entry name" value="Aldolase"/>
    <property type="match status" value="1"/>
</dbReference>
<protein>
    <recommendedName>
        <fullName evidence="1">2-dehydro-3-deoxyphosphooctonate aldolase</fullName>
        <ecNumber evidence="1">2.5.1.55</ecNumber>
    </recommendedName>
    <alternativeName>
        <fullName evidence="1">3-deoxy-D-manno-octulosonic acid 8-phosphate synthase</fullName>
    </alternativeName>
    <alternativeName>
        <fullName evidence="1">KDO-8-phosphate synthase</fullName>
        <shortName evidence="1">KDO 8-P synthase</shortName>
        <shortName evidence="1">KDOPS</shortName>
    </alternativeName>
    <alternativeName>
        <fullName evidence="1">Phospho-2-dehydro-3-deoxyoctonate aldolase</fullName>
    </alternativeName>
</protein>
<keyword id="KW-0963">Cytoplasm</keyword>
<keyword id="KW-0448">Lipopolysaccharide biosynthesis</keyword>
<keyword id="KW-1185">Reference proteome</keyword>
<keyword id="KW-0808">Transferase</keyword>
<proteinExistence type="inferred from homology"/>
<comment type="catalytic activity">
    <reaction evidence="1">
        <text>D-arabinose 5-phosphate + phosphoenolpyruvate + H2O = 3-deoxy-alpha-D-manno-2-octulosonate-8-phosphate + phosphate</text>
        <dbReference type="Rhea" id="RHEA:14053"/>
        <dbReference type="ChEBI" id="CHEBI:15377"/>
        <dbReference type="ChEBI" id="CHEBI:43474"/>
        <dbReference type="ChEBI" id="CHEBI:57693"/>
        <dbReference type="ChEBI" id="CHEBI:58702"/>
        <dbReference type="ChEBI" id="CHEBI:85985"/>
        <dbReference type="EC" id="2.5.1.55"/>
    </reaction>
</comment>
<comment type="pathway">
    <text evidence="1">Carbohydrate biosynthesis; 3-deoxy-D-manno-octulosonate biosynthesis; 3-deoxy-D-manno-octulosonate from D-ribulose 5-phosphate: step 2/3.</text>
</comment>
<comment type="pathway">
    <text evidence="1">Bacterial outer membrane biogenesis; lipopolysaccharide biosynthesis.</text>
</comment>
<comment type="subcellular location">
    <subcellularLocation>
        <location evidence="1">Cytoplasm</location>
    </subcellularLocation>
</comment>
<comment type="similarity">
    <text evidence="1">Belongs to the KdsA family.</text>
</comment>
<reference key="1">
    <citation type="journal article" date="2006" name="J. Bacteriol.">
        <title>The genome sequence of the obligately chemolithoautotrophic, facultatively anaerobic bacterium Thiobacillus denitrificans.</title>
        <authorList>
            <person name="Beller H.R."/>
            <person name="Chain P.S."/>
            <person name="Letain T.E."/>
            <person name="Chakicherla A."/>
            <person name="Larimer F.W."/>
            <person name="Richardson P.M."/>
            <person name="Coleman M.A."/>
            <person name="Wood A.P."/>
            <person name="Kelly D.P."/>
        </authorList>
    </citation>
    <scope>NUCLEOTIDE SEQUENCE [LARGE SCALE GENOMIC DNA]</scope>
    <source>
        <strain>ATCC 25259 / T1</strain>
    </source>
</reference>
<gene>
    <name evidence="1" type="primary">kdsA</name>
    <name type="ordered locus">Tbd_0620</name>
</gene>
<feature type="chain" id="PRO_0000304499" description="2-dehydro-3-deoxyphosphooctonate aldolase">
    <location>
        <begin position="1"/>
        <end position="280"/>
    </location>
</feature>
<accession>Q3SL44</accession>
<name>KDSA_THIDA</name>
<organism>
    <name type="scientific">Thiobacillus denitrificans (strain ATCC 25259 / T1)</name>
    <dbReference type="NCBI Taxonomy" id="292415"/>
    <lineage>
        <taxon>Bacteria</taxon>
        <taxon>Pseudomonadati</taxon>
        <taxon>Pseudomonadota</taxon>
        <taxon>Betaproteobacteria</taxon>
        <taxon>Nitrosomonadales</taxon>
        <taxon>Thiobacillaceae</taxon>
        <taxon>Thiobacillus</taxon>
    </lineage>
</organism>
<evidence type="ECO:0000255" key="1">
    <source>
        <dbReference type="HAMAP-Rule" id="MF_00056"/>
    </source>
</evidence>